<reference key="1">
    <citation type="journal article" date="2001" name="Science">
        <title>The genome of the natural genetic engineer Agrobacterium tumefaciens C58.</title>
        <authorList>
            <person name="Wood D.W."/>
            <person name="Setubal J.C."/>
            <person name="Kaul R."/>
            <person name="Monks D.E."/>
            <person name="Kitajima J.P."/>
            <person name="Okura V.K."/>
            <person name="Zhou Y."/>
            <person name="Chen L."/>
            <person name="Wood G.E."/>
            <person name="Almeida N.F. Jr."/>
            <person name="Woo L."/>
            <person name="Chen Y."/>
            <person name="Paulsen I.T."/>
            <person name="Eisen J.A."/>
            <person name="Karp P.D."/>
            <person name="Bovee D. Sr."/>
            <person name="Chapman P."/>
            <person name="Clendenning J."/>
            <person name="Deatherage G."/>
            <person name="Gillet W."/>
            <person name="Grant C."/>
            <person name="Kutyavin T."/>
            <person name="Levy R."/>
            <person name="Li M.-J."/>
            <person name="McClelland E."/>
            <person name="Palmieri A."/>
            <person name="Raymond C."/>
            <person name="Rouse G."/>
            <person name="Saenphimmachak C."/>
            <person name="Wu Z."/>
            <person name="Romero P."/>
            <person name="Gordon D."/>
            <person name="Zhang S."/>
            <person name="Yoo H."/>
            <person name="Tao Y."/>
            <person name="Biddle P."/>
            <person name="Jung M."/>
            <person name="Krespan W."/>
            <person name="Perry M."/>
            <person name="Gordon-Kamm B."/>
            <person name="Liao L."/>
            <person name="Kim S."/>
            <person name="Hendrick C."/>
            <person name="Zhao Z.-Y."/>
            <person name="Dolan M."/>
            <person name="Chumley F."/>
            <person name="Tingey S.V."/>
            <person name="Tomb J.-F."/>
            <person name="Gordon M.P."/>
            <person name="Olson M.V."/>
            <person name="Nester E.W."/>
        </authorList>
    </citation>
    <scope>NUCLEOTIDE SEQUENCE [LARGE SCALE GENOMIC DNA]</scope>
    <source>
        <strain>C58 / ATCC 33970</strain>
    </source>
</reference>
<reference key="2">
    <citation type="journal article" date="2001" name="Science">
        <title>Genome sequence of the plant pathogen and biotechnology agent Agrobacterium tumefaciens C58.</title>
        <authorList>
            <person name="Goodner B."/>
            <person name="Hinkle G."/>
            <person name="Gattung S."/>
            <person name="Miller N."/>
            <person name="Blanchard M."/>
            <person name="Qurollo B."/>
            <person name="Goldman B.S."/>
            <person name="Cao Y."/>
            <person name="Askenazi M."/>
            <person name="Halling C."/>
            <person name="Mullin L."/>
            <person name="Houmiel K."/>
            <person name="Gordon J."/>
            <person name="Vaudin M."/>
            <person name="Iartchouk O."/>
            <person name="Epp A."/>
            <person name="Liu F."/>
            <person name="Wollam C."/>
            <person name="Allinger M."/>
            <person name="Doughty D."/>
            <person name="Scott C."/>
            <person name="Lappas C."/>
            <person name="Markelz B."/>
            <person name="Flanagan C."/>
            <person name="Crowell C."/>
            <person name="Gurson J."/>
            <person name="Lomo C."/>
            <person name="Sear C."/>
            <person name="Strub G."/>
            <person name="Cielo C."/>
            <person name="Slater S."/>
        </authorList>
    </citation>
    <scope>NUCLEOTIDE SEQUENCE [LARGE SCALE GENOMIC DNA]</scope>
    <source>
        <strain>C58 / ATCC 33970</strain>
    </source>
</reference>
<comment type="function">
    <text evidence="1">This protein binds specifically to 23S rRNA; its binding is stimulated by other ribosomal proteins, e.g. L4, L17, and L20. It is important during the early stages of 50S assembly. It makes multiple contacts with different domains of the 23S rRNA in the assembled 50S subunit and ribosome (By similarity).</text>
</comment>
<comment type="function">
    <text evidence="1">The globular domain of the protein is located near the polypeptide exit tunnel on the outside of the subunit, while an extended beta-hairpin is found that lines the wall of the exit tunnel in the center of the 70S ribosome.</text>
</comment>
<comment type="subunit">
    <text evidence="1">Part of the 50S ribosomal subunit.</text>
</comment>
<comment type="similarity">
    <text evidence="1">Belongs to the universal ribosomal protein uL22 family.</text>
</comment>
<proteinExistence type="inferred from homology"/>
<dbReference type="EMBL" id="AE007869">
    <property type="protein sequence ID" value="AAK87703.1"/>
    <property type="molecule type" value="Genomic_DNA"/>
</dbReference>
<dbReference type="PIR" id="AC2815">
    <property type="entry name" value="AC2815"/>
</dbReference>
<dbReference type="PIR" id="F97593">
    <property type="entry name" value="F97593"/>
</dbReference>
<dbReference type="RefSeq" id="NP_354918.1">
    <property type="nucleotide sequence ID" value="NC_003062.2"/>
</dbReference>
<dbReference type="RefSeq" id="WP_006313972.1">
    <property type="nucleotide sequence ID" value="NC_003062.2"/>
</dbReference>
<dbReference type="SMR" id="Q8UE23"/>
<dbReference type="STRING" id="176299.Atu1941"/>
<dbReference type="EnsemblBacteria" id="AAK87703">
    <property type="protein sequence ID" value="AAK87703"/>
    <property type="gene ID" value="Atu1941"/>
</dbReference>
<dbReference type="GeneID" id="1133979"/>
<dbReference type="KEGG" id="atu:Atu1941"/>
<dbReference type="PATRIC" id="fig|176299.10.peg.1953"/>
<dbReference type="eggNOG" id="COG0091">
    <property type="taxonomic scope" value="Bacteria"/>
</dbReference>
<dbReference type="HOGENOM" id="CLU_083987_3_0_5"/>
<dbReference type="OrthoDB" id="9805969at2"/>
<dbReference type="PhylomeDB" id="Q8UE23"/>
<dbReference type="BioCyc" id="AGRO:ATU1941-MONOMER"/>
<dbReference type="Proteomes" id="UP000000813">
    <property type="component" value="Chromosome circular"/>
</dbReference>
<dbReference type="GO" id="GO:0022625">
    <property type="term" value="C:cytosolic large ribosomal subunit"/>
    <property type="evidence" value="ECO:0007669"/>
    <property type="project" value="TreeGrafter"/>
</dbReference>
<dbReference type="GO" id="GO:0019843">
    <property type="term" value="F:rRNA binding"/>
    <property type="evidence" value="ECO:0007669"/>
    <property type="project" value="UniProtKB-UniRule"/>
</dbReference>
<dbReference type="GO" id="GO:0003735">
    <property type="term" value="F:structural constituent of ribosome"/>
    <property type="evidence" value="ECO:0007669"/>
    <property type="project" value="InterPro"/>
</dbReference>
<dbReference type="GO" id="GO:0006412">
    <property type="term" value="P:translation"/>
    <property type="evidence" value="ECO:0007669"/>
    <property type="project" value="UniProtKB-UniRule"/>
</dbReference>
<dbReference type="CDD" id="cd00336">
    <property type="entry name" value="Ribosomal_L22"/>
    <property type="match status" value="1"/>
</dbReference>
<dbReference type="Gene3D" id="3.90.470.10">
    <property type="entry name" value="Ribosomal protein L22/L17"/>
    <property type="match status" value="1"/>
</dbReference>
<dbReference type="HAMAP" id="MF_01331_B">
    <property type="entry name" value="Ribosomal_uL22_B"/>
    <property type="match status" value="1"/>
</dbReference>
<dbReference type="InterPro" id="IPR001063">
    <property type="entry name" value="Ribosomal_uL22"/>
</dbReference>
<dbReference type="InterPro" id="IPR005727">
    <property type="entry name" value="Ribosomal_uL22_bac/chlpt-type"/>
</dbReference>
<dbReference type="InterPro" id="IPR047867">
    <property type="entry name" value="Ribosomal_uL22_bac/org-type"/>
</dbReference>
<dbReference type="InterPro" id="IPR018260">
    <property type="entry name" value="Ribosomal_uL22_CS"/>
</dbReference>
<dbReference type="InterPro" id="IPR036394">
    <property type="entry name" value="Ribosomal_uL22_sf"/>
</dbReference>
<dbReference type="NCBIfam" id="TIGR01044">
    <property type="entry name" value="rplV_bact"/>
    <property type="match status" value="1"/>
</dbReference>
<dbReference type="PANTHER" id="PTHR13501">
    <property type="entry name" value="CHLOROPLAST 50S RIBOSOMAL PROTEIN L22-RELATED"/>
    <property type="match status" value="1"/>
</dbReference>
<dbReference type="PANTHER" id="PTHR13501:SF8">
    <property type="entry name" value="LARGE RIBOSOMAL SUBUNIT PROTEIN UL22M"/>
    <property type="match status" value="1"/>
</dbReference>
<dbReference type="Pfam" id="PF00237">
    <property type="entry name" value="Ribosomal_L22"/>
    <property type="match status" value="1"/>
</dbReference>
<dbReference type="SUPFAM" id="SSF54843">
    <property type="entry name" value="Ribosomal protein L22"/>
    <property type="match status" value="1"/>
</dbReference>
<dbReference type="PROSITE" id="PS00464">
    <property type="entry name" value="RIBOSOMAL_L22"/>
    <property type="match status" value="1"/>
</dbReference>
<accession>Q8UE23</accession>
<accession>Q7CY74</accession>
<name>RL22_AGRFC</name>
<evidence type="ECO:0000255" key="1">
    <source>
        <dbReference type="HAMAP-Rule" id="MF_01331"/>
    </source>
</evidence>
<evidence type="ECO:0000305" key="2"/>
<gene>
    <name evidence="1" type="primary">rplV</name>
    <name type="ordered locus">Atu1941</name>
    <name type="ORF">AGR_C_3548</name>
</gene>
<keyword id="KW-1185">Reference proteome</keyword>
<keyword id="KW-0687">Ribonucleoprotein</keyword>
<keyword id="KW-0689">Ribosomal protein</keyword>
<keyword id="KW-0694">RNA-binding</keyword>
<keyword id="KW-0699">rRNA-binding</keyword>
<protein>
    <recommendedName>
        <fullName evidence="1">Large ribosomal subunit protein uL22</fullName>
    </recommendedName>
    <alternativeName>
        <fullName evidence="2">50S ribosomal protein L22</fullName>
    </alternativeName>
</protein>
<feature type="chain" id="PRO_0000125108" description="Large ribosomal subunit protein uL22">
    <location>
        <begin position="1"/>
        <end position="129"/>
    </location>
</feature>
<sequence length="129" mass="14300">MAKAKTERRLKDNEAQAIARTLRVSPQKLNLVAALIRGKKVDRALAELEFSRKRIAGTVKKTLESAIANAENNHDLDVDALVVAEAYVGKSITMKRFHARGRGRASRIEKPFAHLTIVVREVEEKGEAA</sequence>
<organism>
    <name type="scientific">Agrobacterium fabrum (strain C58 / ATCC 33970)</name>
    <name type="common">Agrobacterium tumefaciens (strain C58)</name>
    <dbReference type="NCBI Taxonomy" id="176299"/>
    <lineage>
        <taxon>Bacteria</taxon>
        <taxon>Pseudomonadati</taxon>
        <taxon>Pseudomonadota</taxon>
        <taxon>Alphaproteobacteria</taxon>
        <taxon>Hyphomicrobiales</taxon>
        <taxon>Rhizobiaceae</taxon>
        <taxon>Rhizobium/Agrobacterium group</taxon>
        <taxon>Agrobacterium</taxon>
        <taxon>Agrobacterium tumefaciens complex</taxon>
    </lineage>
</organism>